<name>RR4_ANTOD</name>
<organism>
    <name type="scientific">Anthoxanthum odoratum</name>
    <name type="common">Sweet vernal grass</name>
    <dbReference type="NCBI Taxonomy" id="29661"/>
    <lineage>
        <taxon>Eukaryota</taxon>
        <taxon>Viridiplantae</taxon>
        <taxon>Streptophyta</taxon>
        <taxon>Embryophyta</taxon>
        <taxon>Tracheophyta</taxon>
        <taxon>Spermatophyta</taxon>
        <taxon>Magnoliopsida</taxon>
        <taxon>Liliopsida</taxon>
        <taxon>Poales</taxon>
        <taxon>Poaceae</taxon>
        <taxon>BOP clade</taxon>
        <taxon>Pooideae</taxon>
        <taxon>Poodae</taxon>
        <taxon>Poeae</taxon>
        <taxon>Poeae Chloroplast Group 1 (Aveneae type)</taxon>
        <taxon>Anthoxanthinae</taxon>
        <taxon>Anthoxanthum</taxon>
    </lineage>
</organism>
<accession>P36447</accession>
<feature type="chain" id="PRO_0000132533" description="Small ribosomal subunit protein uS4c">
    <location>
        <begin position="1"/>
        <end position="196" status="greater than"/>
    </location>
</feature>
<feature type="domain" description="S4 RNA-binding">
    <location>
        <begin position="89"/>
        <end position="152"/>
    </location>
</feature>
<feature type="region of interest" description="Disordered" evidence="2">
    <location>
        <begin position="16"/>
        <end position="40"/>
    </location>
</feature>
<feature type="non-terminal residue">
    <location>
        <position position="196"/>
    </location>
</feature>
<gene>
    <name type="primary">rps4</name>
</gene>
<dbReference type="EMBL" id="Z29228">
    <property type="protein sequence ID" value="CAA82427.1"/>
    <property type="molecule type" value="Genomic_DNA"/>
</dbReference>
<dbReference type="PIR" id="S41256">
    <property type="entry name" value="S41256"/>
</dbReference>
<dbReference type="SMR" id="P36447"/>
<dbReference type="GO" id="GO:0009507">
    <property type="term" value="C:chloroplast"/>
    <property type="evidence" value="ECO:0007669"/>
    <property type="project" value="UniProtKB-SubCell"/>
</dbReference>
<dbReference type="GO" id="GO:0015935">
    <property type="term" value="C:small ribosomal subunit"/>
    <property type="evidence" value="ECO:0007669"/>
    <property type="project" value="InterPro"/>
</dbReference>
<dbReference type="GO" id="GO:0019843">
    <property type="term" value="F:rRNA binding"/>
    <property type="evidence" value="ECO:0007669"/>
    <property type="project" value="UniProtKB-KW"/>
</dbReference>
<dbReference type="GO" id="GO:0003735">
    <property type="term" value="F:structural constituent of ribosome"/>
    <property type="evidence" value="ECO:0007669"/>
    <property type="project" value="InterPro"/>
</dbReference>
<dbReference type="GO" id="GO:0042274">
    <property type="term" value="P:ribosomal small subunit biogenesis"/>
    <property type="evidence" value="ECO:0007669"/>
    <property type="project" value="TreeGrafter"/>
</dbReference>
<dbReference type="GO" id="GO:0006412">
    <property type="term" value="P:translation"/>
    <property type="evidence" value="ECO:0007669"/>
    <property type="project" value="InterPro"/>
</dbReference>
<dbReference type="CDD" id="cd00165">
    <property type="entry name" value="S4"/>
    <property type="match status" value="1"/>
</dbReference>
<dbReference type="FunFam" id="1.10.1050.10:FF:000002">
    <property type="entry name" value="30S ribosomal protein S4, chloroplastic"/>
    <property type="match status" value="1"/>
</dbReference>
<dbReference type="FunFam" id="3.10.290.10:FF:000081">
    <property type="entry name" value="30S ribosomal protein S4, chloroplastic"/>
    <property type="match status" value="1"/>
</dbReference>
<dbReference type="Gene3D" id="1.10.1050.10">
    <property type="entry name" value="Ribosomal Protein S4 Delta 41, Chain A, domain 1"/>
    <property type="match status" value="1"/>
</dbReference>
<dbReference type="Gene3D" id="3.10.290.10">
    <property type="entry name" value="RNA-binding S4 domain"/>
    <property type="match status" value="1"/>
</dbReference>
<dbReference type="HAMAP" id="MF_01306_B">
    <property type="entry name" value="Ribosomal_uS4_B"/>
    <property type="match status" value="1"/>
</dbReference>
<dbReference type="InterPro" id="IPR022801">
    <property type="entry name" value="Ribosomal_uS4"/>
</dbReference>
<dbReference type="InterPro" id="IPR005709">
    <property type="entry name" value="Ribosomal_uS4_bac-type"/>
</dbReference>
<dbReference type="InterPro" id="IPR018079">
    <property type="entry name" value="Ribosomal_uS4_CS"/>
</dbReference>
<dbReference type="InterPro" id="IPR001912">
    <property type="entry name" value="Ribosomal_uS4_N"/>
</dbReference>
<dbReference type="InterPro" id="IPR002942">
    <property type="entry name" value="S4_RNA-bd"/>
</dbReference>
<dbReference type="InterPro" id="IPR036986">
    <property type="entry name" value="S4_RNA-bd_sf"/>
</dbReference>
<dbReference type="NCBIfam" id="NF003717">
    <property type="entry name" value="PRK05327.1"/>
    <property type="match status" value="1"/>
</dbReference>
<dbReference type="NCBIfam" id="TIGR01017">
    <property type="entry name" value="rpsD_bact"/>
    <property type="match status" value="1"/>
</dbReference>
<dbReference type="PANTHER" id="PTHR11831">
    <property type="entry name" value="30S 40S RIBOSOMAL PROTEIN"/>
    <property type="match status" value="1"/>
</dbReference>
<dbReference type="PANTHER" id="PTHR11831:SF4">
    <property type="entry name" value="SMALL RIBOSOMAL SUBUNIT PROTEIN US4M"/>
    <property type="match status" value="1"/>
</dbReference>
<dbReference type="Pfam" id="PF00163">
    <property type="entry name" value="Ribosomal_S4"/>
    <property type="match status" value="1"/>
</dbReference>
<dbReference type="Pfam" id="PF01479">
    <property type="entry name" value="S4"/>
    <property type="match status" value="1"/>
</dbReference>
<dbReference type="SMART" id="SM01390">
    <property type="entry name" value="Ribosomal_S4"/>
    <property type="match status" value="1"/>
</dbReference>
<dbReference type="SMART" id="SM00363">
    <property type="entry name" value="S4"/>
    <property type="match status" value="1"/>
</dbReference>
<dbReference type="SUPFAM" id="SSF55174">
    <property type="entry name" value="Alpha-L RNA-binding motif"/>
    <property type="match status" value="1"/>
</dbReference>
<dbReference type="PROSITE" id="PS00632">
    <property type="entry name" value="RIBOSOMAL_S4"/>
    <property type="match status" value="1"/>
</dbReference>
<dbReference type="PROSITE" id="PS50889">
    <property type="entry name" value="S4"/>
    <property type="match status" value="1"/>
</dbReference>
<geneLocation type="chloroplast"/>
<keyword id="KW-0150">Chloroplast</keyword>
<keyword id="KW-0934">Plastid</keyword>
<keyword id="KW-0687">Ribonucleoprotein</keyword>
<keyword id="KW-0689">Ribosomal protein</keyword>
<keyword id="KW-0694">RNA-binding</keyword>
<keyword id="KW-0699">rRNA-binding</keyword>
<reference key="1">
    <citation type="journal article" date="1994" name="Plant Syst. Evol.">
        <title>The chloroplast gene rps4 as a tool for the study of Poaceae phylogeny.</title>
        <authorList>
            <person name="Nadot S."/>
            <person name="Bajon R."/>
            <person name="Lejeune B."/>
        </authorList>
        <dbReference type="AGRICOLA" id="IND20417698"/>
    </citation>
    <scope>NUCLEOTIDE SEQUENCE [GENOMIC DNA]</scope>
</reference>
<sequence>MSRYRGPRLKKIRRLGALPGLTRKTPKSGSNLKKKFHSGKKEQYRIRLQEKQKLRFHYGLTERQLLRYVHIAGKAKRSTGQVLLQLLEMRLDNTLFRLGMASTIPGARQLVNHRHILVNGRIVNIPSFRCKPRDIITTKDNQRSKDLVRNSIASSDPGKLPKHLTIDTLEYKGLVNKILDRKWVGLKINELLVVEY</sequence>
<protein>
    <recommendedName>
        <fullName evidence="3">Small ribosomal subunit protein uS4c</fullName>
    </recommendedName>
    <alternativeName>
        <fullName>30S ribosomal protein S4, chloroplastic</fullName>
    </alternativeName>
</protein>
<proteinExistence type="inferred from homology"/>
<comment type="function">
    <text evidence="1">One of the primary rRNA binding proteins, it binds directly to 16S rRNA where it nucleates assembly of the body of the 30S subunit.</text>
</comment>
<comment type="function">
    <text evidence="1">With S5 and S12 plays an important role in translational accuracy.</text>
</comment>
<comment type="subunit">
    <text evidence="1">Part of the 30S ribosomal subunit. Contacts protein S5. The interaction surface between S4 and S5 is involved in control of translational fidelity (By similarity).</text>
</comment>
<comment type="subcellular location">
    <subcellularLocation>
        <location>Plastid</location>
        <location>Chloroplast</location>
    </subcellularLocation>
</comment>
<comment type="similarity">
    <text evidence="3">Belongs to the universal ribosomal protein uS4 family.</text>
</comment>
<evidence type="ECO:0000250" key="1"/>
<evidence type="ECO:0000256" key="2">
    <source>
        <dbReference type="SAM" id="MobiDB-lite"/>
    </source>
</evidence>
<evidence type="ECO:0000305" key="3"/>